<proteinExistence type="inferred from homology"/>
<gene>
    <name type="ORF">GJ12914</name>
</gene>
<dbReference type="EC" id="2.7.7.108" evidence="2"/>
<dbReference type="EC" id="3.1.4.-" evidence="1 2"/>
<dbReference type="EMBL" id="CH940649">
    <property type="protein sequence ID" value="EDW63471.1"/>
    <property type="molecule type" value="Genomic_DNA"/>
</dbReference>
<dbReference type="SMR" id="B4LQT7"/>
<dbReference type="FunCoup" id="B4LQT7">
    <property type="interactions" value="262"/>
</dbReference>
<dbReference type="STRING" id="7244.B4LQT7"/>
<dbReference type="EnsemblMetazoa" id="FBtr0228839">
    <property type="protein sequence ID" value="FBpp0227331"/>
    <property type="gene ID" value="FBgn0200149"/>
</dbReference>
<dbReference type="EnsemblMetazoa" id="XM_002051280.3">
    <property type="protein sequence ID" value="XP_002051316.1"/>
    <property type="gene ID" value="LOC6628012"/>
</dbReference>
<dbReference type="GeneID" id="6628012"/>
<dbReference type="KEGG" id="dvi:6628012"/>
<dbReference type="CTD" id="33897"/>
<dbReference type="eggNOG" id="KOG3824">
    <property type="taxonomic scope" value="Eukaryota"/>
</dbReference>
<dbReference type="HOGENOM" id="CLU_040460_0_0_1"/>
<dbReference type="InParanoid" id="B4LQT7"/>
<dbReference type="OMA" id="QLRCQLW"/>
<dbReference type="OrthoDB" id="439046at2759"/>
<dbReference type="PhylomeDB" id="B4LQT7"/>
<dbReference type="Proteomes" id="UP000008792">
    <property type="component" value="Unassembled WGS sequence"/>
</dbReference>
<dbReference type="GO" id="GO:0005886">
    <property type="term" value="C:plasma membrane"/>
    <property type="evidence" value="ECO:0007669"/>
    <property type="project" value="EnsemblMetazoa"/>
</dbReference>
<dbReference type="GO" id="GO:0070733">
    <property type="term" value="F:AMPylase activity"/>
    <property type="evidence" value="ECO:0000250"/>
    <property type="project" value="UniProtKB"/>
</dbReference>
<dbReference type="GO" id="GO:0005524">
    <property type="term" value="F:ATP binding"/>
    <property type="evidence" value="ECO:0007669"/>
    <property type="project" value="UniProtKB-KW"/>
</dbReference>
<dbReference type="GO" id="GO:0030544">
    <property type="term" value="F:Hsp70 protein binding"/>
    <property type="evidence" value="ECO:0007669"/>
    <property type="project" value="EnsemblMetazoa"/>
</dbReference>
<dbReference type="GO" id="GO:0044603">
    <property type="term" value="F:protein adenylylhydrolase activity"/>
    <property type="evidence" value="ECO:0007669"/>
    <property type="project" value="EnsemblMetazoa"/>
</dbReference>
<dbReference type="GO" id="GO:0042803">
    <property type="term" value="F:protein homodimerization activity"/>
    <property type="evidence" value="ECO:0007669"/>
    <property type="project" value="EnsemblMetazoa"/>
</dbReference>
<dbReference type="GO" id="GO:0050908">
    <property type="term" value="P:detection of light stimulus involved in visual perception"/>
    <property type="evidence" value="ECO:0007669"/>
    <property type="project" value="EnsemblMetazoa"/>
</dbReference>
<dbReference type="GO" id="GO:0051608">
    <property type="term" value="P:histamine transport"/>
    <property type="evidence" value="ECO:0007669"/>
    <property type="project" value="EnsemblMetazoa"/>
</dbReference>
<dbReference type="GO" id="GO:0018117">
    <property type="term" value="P:protein adenylylation"/>
    <property type="evidence" value="ECO:0000250"/>
    <property type="project" value="UniProtKB"/>
</dbReference>
<dbReference type="GO" id="GO:0034976">
    <property type="term" value="P:response to endoplasmic reticulum stress"/>
    <property type="evidence" value="ECO:0007669"/>
    <property type="project" value="EnsemblMetazoa"/>
</dbReference>
<dbReference type="GO" id="GO:0007632">
    <property type="term" value="P:visual behavior"/>
    <property type="evidence" value="ECO:0007669"/>
    <property type="project" value="EnsemblMetazoa"/>
</dbReference>
<dbReference type="FunFam" id="1.10.3290.10:FF:000001">
    <property type="entry name" value="adenosine monophosphate-protein transferase FICD"/>
    <property type="match status" value="1"/>
</dbReference>
<dbReference type="FunFam" id="1.25.40.10:FF:000522">
    <property type="entry name" value="Protein adenylyltransferase Fic"/>
    <property type="match status" value="1"/>
</dbReference>
<dbReference type="Gene3D" id="1.10.3290.10">
    <property type="entry name" value="Fido-like domain"/>
    <property type="match status" value="1"/>
</dbReference>
<dbReference type="Gene3D" id="1.25.40.10">
    <property type="entry name" value="Tetratricopeptide repeat domain"/>
    <property type="match status" value="1"/>
</dbReference>
<dbReference type="InterPro" id="IPR003812">
    <property type="entry name" value="Fido"/>
</dbReference>
<dbReference type="InterPro" id="IPR036597">
    <property type="entry name" value="Fido-like_dom_sf"/>
</dbReference>
<dbReference type="InterPro" id="IPR040198">
    <property type="entry name" value="Fido_containing"/>
</dbReference>
<dbReference type="InterPro" id="IPR011990">
    <property type="entry name" value="TPR-like_helical_dom_sf"/>
</dbReference>
<dbReference type="InterPro" id="IPR019734">
    <property type="entry name" value="TPR_rpt"/>
</dbReference>
<dbReference type="PANTHER" id="PTHR13504">
    <property type="entry name" value="FIDO DOMAIN-CONTAINING PROTEIN DDB_G0283145"/>
    <property type="match status" value="1"/>
</dbReference>
<dbReference type="PANTHER" id="PTHR13504:SF34">
    <property type="entry name" value="PROTEIN ADENYLYLTRANSFERASE FICD"/>
    <property type="match status" value="1"/>
</dbReference>
<dbReference type="Pfam" id="PF02661">
    <property type="entry name" value="Fic"/>
    <property type="match status" value="1"/>
</dbReference>
<dbReference type="Pfam" id="PF13428">
    <property type="entry name" value="TPR_14"/>
    <property type="match status" value="1"/>
</dbReference>
<dbReference type="SUPFAM" id="SSF140931">
    <property type="entry name" value="Fic-like"/>
    <property type="match status" value="1"/>
</dbReference>
<dbReference type="SUPFAM" id="SSF48452">
    <property type="entry name" value="TPR-like"/>
    <property type="match status" value="1"/>
</dbReference>
<dbReference type="PROSITE" id="PS51459">
    <property type="entry name" value="FIDO"/>
    <property type="match status" value="1"/>
</dbReference>
<dbReference type="PROSITE" id="PS50005">
    <property type="entry name" value="TPR"/>
    <property type="match status" value="1"/>
</dbReference>
<dbReference type="PROSITE" id="PS50293">
    <property type="entry name" value="TPR_REGION"/>
    <property type="match status" value="1"/>
</dbReference>
<organism>
    <name type="scientific">Drosophila virilis</name>
    <name type="common">Fruit fly</name>
    <dbReference type="NCBI Taxonomy" id="7244"/>
    <lineage>
        <taxon>Eukaryota</taxon>
        <taxon>Metazoa</taxon>
        <taxon>Ecdysozoa</taxon>
        <taxon>Arthropoda</taxon>
        <taxon>Hexapoda</taxon>
        <taxon>Insecta</taxon>
        <taxon>Pterygota</taxon>
        <taxon>Neoptera</taxon>
        <taxon>Endopterygota</taxon>
        <taxon>Diptera</taxon>
        <taxon>Brachycera</taxon>
        <taxon>Muscomorpha</taxon>
        <taxon>Ephydroidea</taxon>
        <taxon>Drosophilidae</taxon>
        <taxon>Drosophila</taxon>
    </lineage>
</organism>
<accession>B4LQT7</accession>
<name>FICD_DROVI</name>
<protein>
    <recommendedName>
        <fullName>Protein adenylyltransferase Fic</fullName>
        <ecNumber evidence="2">2.7.7.108</ecNumber>
    </recommendedName>
    <alternativeName>
        <fullName evidence="6">De-AMPylase Fic</fullName>
        <ecNumber evidence="1 2">3.1.4.-</ecNumber>
    </alternativeName>
</protein>
<keyword id="KW-0067">ATP-binding</keyword>
<keyword id="KW-0378">Hydrolase</keyword>
<keyword id="KW-0472">Membrane</keyword>
<keyword id="KW-0547">Nucleotide-binding</keyword>
<keyword id="KW-0548">Nucleotidyltransferase</keyword>
<keyword id="KW-1185">Reference proteome</keyword>
<keyword id="KW-0677">Repeat</keyword>
<keyword id="KW-0802">TPR repeat</keyword>
<keyword id="KW-0808">Transferase</keyword>
<keyword id="KW-0812">Transmembrane</keyword>
<keyword id="KW-1133">Transmembrane helix</keyword>
<comment type="function">
    <text evidence="1 2">Protein that can both mediate the addition of adenosine 5'-monophosphate (AMP) to specific residues of target proteins (AMPylation), and the removal of the same modification from target proteins (de-AMPylation), depending on the context (By similarity). The side chain of Glu-236 determines which of the two opposing activities (AMPylase or de-AMPylase) will take place (By similarity). Acts as a key regulator of the unfolded protein response (UPR) by mediating AMPylation or de-AMPylation of Hsc70-3/BiP. In unstressed cells, acts as an adenylyltransferase by mediating AMPylation of Hsc70-3/BiP at 'Thr-518', thereby inactivating it. In response to endoplasmic reticulum stress, acts as a phosphodiesterase by mediating removal of ATP (de-AMPylation) from Hsc70-3/BiP at 'Thr-518', leading to restore HSPA5/BiP activity (By similarity).</text>
</comment>
<comment type="catalytic activity">
    <reaction evidence="3">
        <text>L-tyrosyl-[protein] + ATP = O-(5'-adenylyl)-L-tyrosyl-[protein] + diphosphate</text>
        <dbReference type="Rhea" id="RHEA:54288"/>
        <dbReference type="Rhea" id="RHEA-COMP:10136"/>
        <dbReference type="Rhea" id="RHEA-COMP:13846"/>
        <dbReference type="ChEBI" id="CHEBI:30616"/>
        <dbReference type="ChEBI" id="CHEBI:33019"/>
        <dbReference type="ChEBI" id="CHEBI:46858"/>
        <dbReference type="ChEBI" id="CHEBI:83624"/>
        <dbReference type="EC" id="2.7.7.108"/>
    </reaction>
</comment>
<comment type="catalytic activity">
    <reaction evidence="2">
        <text>L-threonyl-[protein] + ATP = 3-O-(5'-adenylyl)-L-threonyl-[protein] + diphosphate</text>
        <dbReference type="Rhea" id="RHEA:54292"/>
        <dbReference type="Rhea" id="RHEA-COMP:11060"/>
        <dbReference type="Rhea" id="RHEA-COMP:13847"/>
        <dbReference type="ChEBI" id="CHEBI:30013"/>
        <dbReference type="ChEBI" id="CHEBI:30616"/>
        <dbReference type="ChEBI" id="CHEBI:33019"/>
        <dbReference type="ChEBI" id="CHEBI:138113"/>
        <dbReference type="EC" id="2.7.7.108"/>
    </reaction>
</comment>
<comment type="catalytic activity">
    <reaction evidence="2">
        <text>3-O-(5'-adenylyl)-L-threonyl-[protein] + H2O = L-threonyl-[protein] + AMP + H(+)</text>
        <dbReference type="Rhea" id="RHEA:55932"/>
        <dbReference type="Rhea" id="RHEA-COMP:11060"/>
        <dbReference type="Rhea" id="RHEA-COMP:13847"/>
        <dbReference type="ChEBI" id="CHEBI:15377"/>
        <dbReference type="ChEBI" id="CHEBI:15378"/>
        <dbReference type="ChEBI" id="CHEBI:30013"/>
        <dbReference type="ChEBI" id="CHEBI:138113"/>
        <dbReference type="ChEBI" id="CHEBI:456215"/>
    </reaction>
</comment>
<comment type="activity regulation">
    <text evidence="1 3">The side chain of Glu-236 determines which of the two opposing activities (AMPylase or de-AMPylase) will take place. In response to endoplasmic reticulum stress, mediates de-AMPylase activity (By similarity). Adenylyltransferase activity is inhibited by the inhibitory helix present at the N-terminus: Glu-236 binds ATP and competes with ATP-binding at Arg-375, thereby preventing adenylyltransferase activity (By similarity). In unstressed cells, disengagement of Glu-236 promotes adenylyltransferase activity (By similarity). Activation dissociates ATP-binding from Glu-236, allowing ordered binding of the entire ATP moiety with the alpha-phosphate in an orientation that is productive for accepting an incoming target hydroxyl side chain (By similarity).</text>
</comment>
<comment type="subunit">
    <text evidence="2">Homodimer.</text>
</comment>
<comment type="subcellular location">
    <subcellularLocation>
        <location evidence="2">Membrane</location>
        <topology evidence="2">Single-pass membrane protein</topology>
    </subcellularLocation>
</comment>
<comment type="domain">
    <text evidence="3">The fido domain mediates the adenylyltransferase activity.</text>
</comment>
<comment type="similarity">
    <text evidence="6">Belongs to the fic family.</text>
</comment>
<sequence>MAKAKAKQEPQQQRQTLQATYRFVLFFIAGSLAAFAFHALTSSTGSLMGWRLRLHHLPTAHYLQTRDEFAVYSVDELNAFKEFYDKSISDSVGASFTEAEQTNIKEAMGALRLAQEMYMAGKDDKAARLFEHALALAPKHPEVLLRYGEFLEHNQRNIVLADQYYFQALCISPSNSEALANRQRTADVVQTLDERRLISLDEKRDALSAIHEANSALRRAKKEAYFQHIYHSVGIEGNTMTLAQTRSVLETRMAVDGKSIDEHNEILGMDLAMKYINASLVQKLEITLKDILELHRRVLGHVDPIEGGEFRRNQVYVGGHVPPGPGDLAILMQRFEHWLNSEHSSSLHPVNYAALAHYKLVHIHPFVDGNGRTSRLLMNTLLMRAGYPPVIIPKQQRSKYYHFLKLANEGDIRPFVRFIADCTEKTLDLYLWATSDLPQQIPMLIQTENEGHVLAQLQPHIAQSIPELHESGSGSGSGADPIRVP</sequence>
<feature type="chain" id="PRO_0000381791" description="Protein adenylyltransferase Fic">
    <location>
        <begin position="1"/>
        <end position="485"/>
    </location>
</feature>
<feature type="transmembrane region" description="Helical" evidence="4">
    <location>
        <begin position="21"/>
        <end position="43"/>
    </location>
</feature>
<feature type="repeat" description="TPR 1">
    <location>
        <begin position="107"/>
        <end position="140"/>
    </location>
</feature>
<feature type="repeat" description="TPR 2">
    <location>
        <begin position="141"/>
        <end position="175"/>
    </location>
</feature>
<feature type="domain" description="Fido" evidence="5">
    <location>
        <begin position="286"/>
        <end position="421"/>
    </location>
</feature>
<feature type="short sequence motif" description="Inhibitory (S/T)XXXE(G/N) motif">
    <location>
        <begin position="232"/>
        <end position="237"/>
    </location>
</feature>
<feature type="active site" evidence="1">
    <location>
        <position position="364"/>
    </location>
</feature>
<feature type="binding site" evidence="3">
    <location>
        <position position="236"/>
    </location>
    <ligand>
        <name>ATP</name>
        <dbReference type="ChEBI" id="CHEBI:30616"/>
    </ligand>
</feature>
<feature type="binding site" evidence="3">
    <location>
        <begin position="317"/>
        <end position="320"/>
    </location>
    <ligand>
        <name>ATP</name>
        <dbReference type="ChEBI" id="CHEBI:30616"/>
    </ligand>
</feature>
<feature type="binding site" evidence="3">
    <location>
        <begin position="368"/>
        <end position="375"/>
    </location>
    <ligand>
        <name>ATP</name>
        <dbReference type="ChEBI" id="CHEBI:30616"/>
    </ligand>
</feature>
<feature type="binding site" evidence="3">
    <location>
        <begin position="400"/>
        <end position="401"/>
    </location>
    <ligand>
        <name>ATP</name>
        <dbReference type="ChEBI" id="CHEBI:30616"/>
    </ligand>
</feature>
<feature type="binding site" evidence="3">
    <location>
        <position position="408"/>
    </location>
    <ligand>
        <name>ATP</name>
        <dbReference type="ChEBI" id="CHEBI:30616"/>
    </ligand>
</feature>
<feature type="site" description="Important for autoinhibition of adenylyltransferase activity" evidence="3">
    <location>
        <position position="236"/>
    </location>
</feature>
<reference key="1">
    <citation type="journal article" date="2007" name="Nature">
        <title>Evolution of genes and genomes on the Drosophila phylogeny.</title>
        <authorList>
            <consortium name="Drosophila 12 genomes consortium"/>
        </authorList>
    </citation>
    <scope>NUCLEOTIDE SEQUENCE [LARGE SCALE GENOMIC DNA]</scope>
    <source>
        <strain>Tucson 15010-1051.87</strain>
    </source>
</reference>
<evidence type="ECO:0000250" key="1">
    <source>
        <dbReference type="UniProtKB" id="A0A061I403"/>
    </source>
</evidence>
<evidence type="ECO:0000250" key="2">
    <source>
        <dbReference type="UniProtKB" id="Q8SWV6"/>
    </source>
</evidence>
<evidence type="ECO:0000250" key="3">
    <source>
        <dbReference type="UniProtKB" id="Q9BVA6"/>
    </source>
</evidence>
<evidence type="ECO:0000255" key="4"/>
<evidence type="ECO:0000255" key="5">
    <source>
        <dbReference type="PROSITE-ProRule" id="PRU00791"/>
    </source>
</evidence>
<evidence type="ECO:0000305" key="6"/>